<evidence type="ECO:0000250" key="1"/>
<evidence type="ECO:0000305" key="2"/>
<sequence>MSESQSELDKYGTNLTKTAATNKLDPVIGRDAEIRRVCQILSRRTKNNPVLIGSAGVGKTAIVEGLAQRIVAGDVPESLRNKEIVSLDLSALLAGASYRGEFEKRVKNLLEEIQKSKVIIFIDEVHTLMSAGAAEGAIAAGNMLKPLLARGELRLIGATTLDEYREHLEKDPALERRFQQVFVGEPNLEDCIAIMRGLKERYEAHHKVSISDTALVTAVELSSRYITGRQLPDKAIDLLDEAASSLRMEIDSSPVELDQLRREVDRLRLEELALKSENDPTSEQRLRSITNQLSGKQEMLNTLQASWNSERARLNQIGALKEQIDIAKQSADIAQREGRLEDASRLLYATIPQLQKNLAEKLEEQDSAPLVSDQVMPEDIASVVEGWTGIPVKKLMQKDAKQLLHLEEDLSKSVIAQKVAIGVIADAVRRSRAGLSDPNRPSGTFLFLGPTGVGKTQLVKALASLLYDGEIVRIDMSEYSEKFSISRLIGAPPGYIGHESAGQLTESVRRRPYSVVLFDEAEKAHPEVFDILLQVLDEGRLTDSHGRTVDFRNTIIVLTSNIGSRYLSDISLEATTAHEYVNDEVRRTFRPEFLNRLDEIVIFEPLSQSDICQIVDLNIESLNKRIKDRRIVVTVSEDLRRWLSKSGYDVIYGARPLRRLIQREIEDRLAKLIIEGLIHDGQTASFDLSGGAVNAQVCS</sequence>
<reference key="1">
    <citation type="journal article" date="2003" name="Lancet">
        <title>Sequencing and analysis of the genome of the Whipple's disease bacterium Tropheryma whipplei.</title>
        <authorList>
            <person name="Bentley S.D."/>
            <person name="Maiwald M."/>
            <person name="Murphy L.D."/>
            <person name="Pallen M.J."/>
            <person name="Yeats C.A."/>
            <person name="Dover L.G."/>
            <person name="Norbertczak H.T."/>
            <person name="Besra G.S."/>
            <person name="Quail M.A."/>
            <person name="Harris D.E."/>
            <person name="von Herbay A."/>
            <person name="Goble A."/>
            <person name="Rutter S."/>
            <person name="Squares R."/>
            <person name="Squares S."/>
            <person name="Barrell B.G."/>
            <person name="Parkhill J."/>
            <person name="Relman D.A."/>
        </authorList>
    </citation>
    <scope>NUCLEOTIDE SEQUENCE [LARGE SCALE GENOMIC DNA]</scope>
    <source>
        <strain>TW08/27</strain>
    </source>
</reference>
<organism>
    <name type="scientific">Tropheryma whipplei (strain TW08/27)</name>
    <name type="common">Whipple's bacillus</name>
    <dbReference type="NCBI Taxonomy" id="218496"/>
    <lineage>
        <taxon>Bacteria</taxon>
        <taxon>Bacillati</taxon>
        <taxon>Actinomycetota</taxon>
        <taxon>Actinomycetes</taxon>
        <taxon>Micrococcales</taxon>
        <taxon>Tropherymataceae</taxon>
        <taxon>Tropheryma</taxon>
    </lineage>
</organism>
<name>CLPB_TROW8</name>
<feature type="chain" id="PRO_0000191198" description="Chaperone protein ClpB">
    <location>
        <begin position="1"/>
        <end position="699"/>
    </location>
</feature>
<feature type="region of interest" description="NBD1" evidence="1">
    <location>
        <begin position="8"/>
        <end position="185"/>
    </location>
</feature>
<feature type="region of interest" description="Linker" evidence="1">
    <location>
        <begin position="186"/>
        <end position="389"/>
    </location>
</feature>
<feature type="region of interest" description="NBD2" evidence="1">
    <location>
        <begin position="399"/>
        <end position="605"/>
    </location>
</feature>
<feature type="region of interest" description="C-terminal" evidence="1">
    <location>
        <begin position="606"/>
        <end position="699"/>
    </location>
</feature>
<feature type="coiled-coil region" evidence="1">
    <location>
        <begin position="236"/>
        <end position="367"/>
    </location>
</feature>
<feature type="binding site" evidence="1">
    <location>
        <begin position="53"/>
        <end position="60"/>
    </location>
    <ligand>
        <name>ATP</name>
        <dbReference type="ChEBI" id="CHEBI:30616"/>
        <label>1</label>
    </ligand>
</feature>
<feature type="binding site" evidence="1">
    <location>
        <begin position="449"/>
        <end position="456"/>
    </location>
    <ligand>
        <name>ATP</name>
        <dbReference type="ChEBI" id="CHEBI:30616"/>
        <label>2</label>
    </ligand>
</feature>
<gene>
    <name type="primary">clpB</name>
    <name type="ordered locus">TW758</name>
</gene>
<keyword id="KW-0067">ATP-binding</keyword>
<keyword id="KW-0143">Chaperone</keyword>
<keyword id="KW-0175">Coiled coil</keyword>
<keyword id="KW-0963">Cytoplasm</keyword>
<keyword id="KW-0547">Nucleotide-binding</keyword>
<keyword id="KW-0677">Repeat</keyword>
<keyword id="KW-0346">Stress response</keyword>
<proteinExistence type="inferred from homology"/>
<dbReference type="EMBL" id="BX251412">
    <property type="protein sequence ID" value="CAD67417.1"/>
    <property type="molecule type" value="Genomic_DNA"/>
</dbReference>
<dbReference type="RefSeq" id="WP_011096695.1">
    <property type="nucleotide sequence ID" value="NC_004551.1"/>
</dbReference>
<dbReference type="SMR" id="Q83N78"/>
<dbReference type="GeneID" id="67388539"/>
<dbReference type="KEGG" id="tws:TW758"/>
<dbReference type="HOGENOM" id="CLU_005070_4_0_11"/>
<dbReference type="GO" id="GO:0005737">
    <property type="term" value="C:cytoplasm"/>
    <property type="evidence" value="ECO:0007669"/>
    <property type="project" value="UniProtKB-SubCell"/>
</dbReference>
<dbReference type="GO" id="GO:0005524">
    <property type="term" value="F:ATP binding"/>
    <property type="evidence" value="ECO:0007669"/>
    <property type="project" value="UniProtKB-KW"/>
</dbReference>
<dbReference type="GO" id="GO:0016887">
    <property type="term" value="F:ATP hydrolysis activity"/>
    <property type="evidence" value="ECO:0007669"/>
    <property type="project" value="InterPro"/>
</dbReference>
<dbReference type="GO" id="GO:0034605">
    <property type="term" value="P:cellular response to heat"/>
    <property type="evidence" value="ECO:0007669"/>
    <property type="project" value="TreeGrafter"/>
</dbReference>
<dbReference type="CDD" id="cd00009">
    <property type="entry name" value="AAA"/>
    <property type="match status" value="1"/>
</dbReference>
<dbReference type="CDD" id="cd19499">
    <property type="entry name" value="RecA-like_ClpB_Hsp104-like"/>
    <property type="match status" value="1"/>
</dbReference>
<dbReference type="FunFam" id="3.40.50.300:FF:000120">
    <property type="entry name" value="ATP-dependent chaperone ClpB"/>
    <property type="match status" value="1"/>
</dbReference>
<dbReference type="FunFam" id="3.40.50.300:FF:000025">
    <property type="entry name" value="ATP-dependent Clp protease subunit"/>
    <property type="match status" value="1"/>
</dbReference>
<dbReference type="FunFam" id="3.40.50.300:FF:000010">
    <property type="entry name" value="Chaperone clpB 1, putative"/>
    <property type="match status" value="1"/>
</dbReference>
<dbReference type="Gene3D" id="1.10.8.60">
    <property type="match status" value="1"/>
</dbReference>
<dbReference type="Gene3D" id="3.40.50.300">
    <property type="entry name" value="P-loop containing nucleotide triphosphate hydrolases"/>
    <property type="match status" value="3"/>
</dbReference>
<dbReference type="InterPro" id="IPR003593">
    <property type="entry name" value="AAA+_ATPase"/>
</dbReference>
<dbReference type="InterPro" id="IPR003959">
    <property type="entry name" value="ATPase_AAA_core"/>
</dbReference>
<dbReference type="InterPro" id="IPR019489">
    <property type="entry name" value="Clp_ATPase_C"/>
</dbReference>
<dbReference type="InterPro" id="IPR001270">
    <property type="entry name" value="ClpA/B"/>
</dbReference>
<dbReference type="InterPro" id="IPR018368">
    <property type="entry name" value="ClpA/B_CS1"/>
</dbReference>
<dbReference type="InterPro" id="IPR028299">
    <property type="entry name" value="ClpA/B_CS2"/>
</dbReference>
<dbReference type="InterPro" id="IPR041546">
    <property type="entry name" value="ClpA/ClpB_AAA_lid"/>
</dbReference>
<dbReference type="InterPro" id="IPR050130">
    <property type="entry name" value="ClpA_ClpB"/>
</dbReference>
<dbReference type="InterPro" id="IPR027417">
    <property type="entry name" value="P-loop_NTPase"/>
</dbReference>
<dbReference type="PANTHER" id="PTHR11638">
    <property type="entry name" value="ATP-DEPENDENT CLP PROTEASE"/>
    <property type="match status" value="1"/>
</dbReference>
<dbReference type="PANTHER" id="PTHR11638:SF18">
    <property type="entry name" value="HEAT SHOCK PROTEIN 104"/>
    <property type="match status" value="1"/>
</dbReference>
<dbReference type="Pfam" id="PF00004">
    <property type="entry name" value="AAA"/>
    <property type="match status" value="1"/>
</dbReference>
<dbReference type="Pfam" id="PF07724">
    <property type="entry name" value="AAA_2"/>
    <property type="match status" value="1"/>
</dbReference>
<dbReference type="Pfam" id="PF17871">
    <property type="entry name" value="AAA_lid_9"/>
    <property type="match status" value="1"/>
</dbReference>
<dbReference type="Pfam" id="PF10431">
    <property type="entry name" value="ClpB_D2-small"/>
    <property type="match status" value="1"/>
</dbReference>
<dbReference type="PRINTS" id="PR00300">
    <property type="entry name" value="CLPPROTEASEA"/>
</dbReference>
<dbReference type="SMART" id="SM00382">
    <property type="entry name" value="AAA"/>
    <property type="match status" value="2"/>
</dbReference>
<dbReference type="SMART" id="SM01086">
    <property type="entry name" value="ClpB_D2-small"/>
    <property type="match status" value="1"/>
</dbReference>
<dbReference type="SUPFAM" id="SSF52540">
    <property type="entry name" value="P-loop containing nucleoside triphosphate hydrolases"/>
    <property type="match status" value="2"/>
</dbReference>
<dbReference type="PROSITE" id="PS00870">
    <property type="entry name" value="CLPAB_1"/>
    <property type="match status" value="1"/>
</dbReference>
<dbReference type="PROSITE" id="PS00871">
    <property type="entry name" value="CLPAB_2"/>
    <property type="match status" value="1"/>
</dbReference>
<accession>Q83N78</accession>
<comment type="function">
    <text evidence="1">Part of a stress-induced multi-chaperone system, it is involved in the recovery of the cell from heat-induced damage, in cooperation with DnaK, DnaJ and GrpE. Acts before DnaK, in the processing of protein aggregates. Protein binding stimulates the ATPase activity; ATP hydrolysis unfolds the denatured protein aggregates, which probably helps expose new hydrophobic binding sites on the surface of ClpB-bound aggregates, contributing to the solubilization and refolding of denatured protein aggregates by DnaK (By similarity).</text>
</comment>
<comment type="subunit">
    <text evidence="1">Homohexamer. The oligomerization is ATP-dependent (By similarity).</text>
</comment>
<comment type="subcellular location">
    <subcellularLocation>
        <location evidence="2">Cytoplasm</location>
    </subcellularLocation>
</comment>
<comment type="domain">
    <text evidence="1">The N-terminal domain probably functions as a substrate-discriminating domain, recruiting aggregated proteins to the ClpB hexamer and/or stabilizing bound proteins. The NBD2 domain is responsible for oligomerization, whereas the NBD1 domain stabilizes the hexamer probably in an ATP-dependent manner. The movement of the coiled-coil domain is essential for ClpB ability to rescue proteins from an aggregated state, probably by pulling apart large aggregated proteins, which are bound between the coiled-coils motifs of adjacent ClpB subunits in the functional hexamer (By similarity).</text>
</comment>
<comment type="similarity">
    <text evidence="2">Belongs to the ClpA/ClpB family.</text>
</comment>
<protein>
    <recommendedName>
        <fullName>Chaperone protein ClpB</fullName>
    </recommendedName>
</protein>